<keyword id="KW-0067">ATP-binding</keyword>
<keyword id="KW-0175">Coiled coil</keyword>
<keyword id="KW-0347">Helicase</keyword>
<keyword id="KW-0378">Hydrolase</keyword>
<keyword id="KW-0547">Nucleotide-binding</keyword>
<keyword id="KW-0539">Nucleus</keyword>
<keyword id="KW-1185">Reference proteome</keyword>
<keyword id="KW-0690">Ribosome biogenesis</keyword>
<keyword id="KW-0694">RNA-binding</keyword>
<keyword id="KW-0698">rRNA processing</keyword>
<comment type="function">
    <text evidence="1">ATP-binding RNA helicase involved in the biogenesis of 60S ribosomal subunits. Binds 90S pre-ribosomal particles and dissociates from pre-60S ribosomal particles after processing of 27SB pre-rRNA. Required for the normal formation of 18S rRNA through the processing of pre-rRNAs at sites A0, A1 and A2, and the normal formation of 25S and 5.8S rRNAs through the processing of pre-rRNAs at sites C1 and C2.</text>
</comment>
<comment type="catalytic activity">
    <reaction evidence="1">
        <text>ATP + H2O = ADP + phosphate + H(+)</text>
        <dbReference type="Rhea" id="RHEA:13065"/>
        <dbReference type="ChEBI" id="CHEBI:15377"/>
        <dbReference type="ChEBI" id="CHEBI:15378"/>
        <dbReference type="ChEBI" id="CHEBI:30616"/>
        <dbReference type="ChEBI" id="CHEBI:43474"/>
        <dbReference type="ChEBI" id="CHEBI:456216"/>
        <dbReference type="EC" id="3.6.4.13"/>
    </reaction>
</comment>
<comment type="subunit">
    <text evidence="1">Component of pre-60S ribosomal complexes.</text>
</comment>
<comment type="subcellular location">
    <subcellularLocation>
        <location evidence="1">Nucleus</location>
        <location evidence="1">Nucleolus</location>
    </subcellularLocation>
</comment>
<comment type="domain">
    <text>The Q motif is unique to and characteristic of the DEAD box family of RNA helicases and controls ATP binding and hydrolysis.</text>
</comment>
<comment type="similarity">
    <text evidence="6">Belongs to the DEAD box helicase family. DDX55/SPB4 subfamily.</text>
</comment>
<organism>
    <name type="scientific">Mycosarcoma maydis</name>
    <name type="common">Corn smut fungus</name>
    <name type="synonym">Ustilago maydis</name>
    <dbReference type="NCBI Taxonomy" id="5270"/>
    <lineage>
        <taxon>Eukaryota</taxon>
        <taxon>Fungi</taxon>
        <taxon>Dikarya</taxon>
        <taxon>Basidiomycota</taxon>
        <taxon>Ustilaginomycotina</taxon>
        <taxon>Ustilaginomycetes</taxon>
        <taxon>Ustilaginales</taxon>
        <taxon>Ustilaginaceae</taxon>
        <taxon>Mycosarcoma</taxon>
    </lineage>
</organism>
<gene>
    <name evidence="1" type="primary">SPB4</name>
    <name type="ORF">UMAG_03268</name>
</gene>
<protein>
    <recommendedName>
        <fullName evidence="6">ATP-dependent rRNA helicase SPB4</fullName>
        <ecNumber evidence="1">3.6.4.13</ecNumber>
    </recommendedName>
</protein>
<evidence type="ECO:0000250" key="1">
    <source>
        <dbReference type="UniProtKB" id="P25808"/>
    </source>
</evidence>
<evidence type="ECO:0000255" key="2"/>
<evidence type="ECO:0000255" key="3">
    <source>
        <dbReference type="PROSITE-ProRule" id="PRU00541"/>
    </source>
</evidence>
<evidence type="ECO:0000255" key="4">
    <source>
        <dbReference type="PROSITE-ProRule" id="PRU00542"/>
    </source>
</evidence>
<evidence type="ECO:0000256" key="5">
    <source>
        <dbReference type="SAM" id="MobiDB-lite"/>
    </source>
</evidence>
<evidence type="ECO:0000305" key="6"/>
<name>SPB4_MYCMD</name>
<reference key="1">
    <citation type="journal article" date="2006" name="Nature">
        <title>Insights from the genome of the biotrophic fungal plant pathogen Ustilago maydis.</title>
        <authorList>
            <person name="Kaemper J."/>
            <person name="Kahmann R."/>
            <person name="Boelker M."/>
            <person name="Ma L.-J."/>
            <person name="Brefort T."/>
            <person name="Saville B.J."/>
            <person name="Banuett F."/>
            <person name="Kronstad J.W."/>
            <person name="Gold S.E."/>
            <person name="Mueller O."/>
            <person name="Perlin M.H."/>
            <person name="Woesten H.A.B."/>
            <person name="de Vries R."/>
            <person name="Ruiz-Herrera J."/>
            <person name="Reynaga-Pena C.G."/>
            <person name="Snetselaar K."/>
            <person name="McCann M."/>
            <person name="Perez-Martin J."/>
            <person name="Feldbruegge M."/>
            <person name="Basse C.W."/>
            <person name="Steinberg G."/>
            <person name="Ibeas J.I."/>
            <person name="Holloman W."/>
            <person name="Guzman P."/>
            <person name="Farman M.L."/>
            <person name="Stajich J.E."/>
            <person name="Sentandreu R."/>
            <person name="Gonzalez-Prieto J.M."/>
            <person name="Kennell J.C."/>
            <person name="Molina L."/>
            <person name="Schirawski J."/>
            <person name="Mendoza-Mendoza A."/>
            <person name="Greilinger D."/>
            <person name="Muench K."/>
            <person name="Roessel N."/>
            <person name="Scherer M."/>
            <person name="Vranes M."/>
            <person name="Ladendorf O."/>
            <person name="Vincon V."/>
            <person name="Fuchs U."/>
            <person name="Sandrock B."/>
            <person name="Meng S."/>
            <person name="Ho E.C.H."/>
            <person name="Cahill M.J."/>
            <person name="Boyce K.J."/>
            <person name="Klose J."/>
            <person name="Klosterman S.J."/>
            <person name="Deelstra H.J."/>
            <person name="Ortiz-Castellanos L."/>
            <person name="Li W."/>
            <person name="Sanchez-Alonso P."/>
            <person name="Schreier P.H."/>
            <person name="Haeuser-Hahn I."/>
            <person name="Vaupel M."/>
            <person name="Koopmann E."/>
            <person name="Friedrich G."/>
            <person name="Voss H."/>
            <person name="Schlueter T."/>
            <person name="Margolis J."/>
            <person name="Platt D."/>
            <person name="Swimmer C."/>
            <person name="Gnirke A."/>
            <person name="Chen F."/>
            <person name="Vysotskaia V."/>
            <person name="Mannhaupt G."/>
            <person name="Gueldener U."/>
            <person name="Muensterkoetter M."/>
            <person name="Haase D."/>
            <person name="Oesterheld M."/>
            <person name="Mewes H.-W."/>
            <person name="Mauceli E.W."/>
            <person name="DeCaprio D."/>
            <person name="Wade C.M."/>
            <person name="Butler J."/>
            <person name="Young S.K."/>
            <person name="Jaffe D.B."/>
            <person name="Calvo S.E."/>
            <person name="Nusbaum C."/>
            <person name="Galagan J.E."/>
            <person name="Birren B.W."/>
        </authorList>
    </citation>
    <scope>NUCLEOTIDE SEQUENCE [LARGE SCALE GENOMIC DNA]</scope>
    <source>
        <strain>DSM 14603 / FGSC 9021 / UM521</strain>
    </source>
</reference>
<reference key="2">
    <citation type="submission" date="2014-09" db="EMBL/GenBank/DDBJ databases">
        <authorList>
            <person name="Gueldener U."/>
            <person name="Muensterkoetter M."/>
            <person name="Walter M.C."/>
            <person name="Mannhaupt G."/>
            <person name="Kahmann R."/>
        </authorList>
    </citation>
    <scope>GENOME REANNOTATION</scope>
    <source>
        <strain>DSM 14603 / FGSC 9021 / UM521</strain>
    </source>
</reference>
<dbReference type="EC" id="3.6.4.13" evidence="1"/>
<dbReference type="EMBL" id="CM003147">
    <property type="protein sequence ID" value="KIS68697.1"/>
    <property type="molecule type" value="Genomic_DNA"/>
</dbReference>
<dbReference type="RefSeq" id="XP_011389684.1">
    <property type="nucleotide sequence ID" value="XM_011391382.1"/>
</dbReference>
<dbReference type="SMR" id="Q4P9E5"/>
<dbReference type="FunCoup" id="Q4P9E5">
    <property type="interactions" value="836"/>
</dbReference>
<dbReference type="STRING" id="237631.Q4P9E5"/>
<dbReference type="EnsemblFungi" id="KIS68697">
    <property type="protein sequence ID" value="KIS68697"/>
    <property type="gene ID" value="UMAG_03268"/>
</dbReference>
<dbReference type="GeneID" id="23563772"/>
<dbReference type="KEGG" id="uma:UMAG_03268"/>
<dbReference type="VEuPathDB" id="FungiDB:UMAG_03268"/>
<dbReference type="eggNOG" id="KOG0345">
    <property type="taxonomic scope" value="Eukaryota"/>
</dbReference>
<dbReference type="InParanoid" id="Q4P9E5"/>
<dbReference type="OrthoDB" id="7396459at2759"/>
<dbReference type="Proteomes" id="UP000000561">
    <property type="component" value="Chromosome 8"/>
</dbReference>
<dbReference type="GO" id="GO:0005730">
    <property type="term" value="C:nucleolus"/>
    <property type="evidence" value="ECO:0000318"/>
    <property type="project" value="GO_Central"/>
</dbReference>
<dbReference type="GO" id="GO:0005524">
    <property type="term" value="F:ATP binding"/>
    <property type="evidence" value="ECO:0007669"/>
    <property type="project" value="UniProtKB-KW"/>
</dbReference>
<dbReference type="GO" id="GO:0016887">
    <property type="term" value="F:ATP hydrolysis activity"/>
    <property type="evidence" value="ECO:0007669"/>
    <property type="project" value="RHEA"/>
</dbReference>
<dbReference type="GO" id="GO:0003723">
    <property type="term" value="F:RNA binding"/>
    <property type="evidence" value="ECO:0007669"/>
    <property type="project" value="UniProtKB-KW"/>
</dbReference>
<dbReference type="GO" id="GO:0003724">
    <property type="term" value="F:RNA helicase activity"/>
    <property type="evidence" value="ECO:0007669"/>
    <property type="project" value="UniProtKB-EC"/>
</dbReference>
<dbReference type="GO" id="GO:0006364">
    <property type="term" value="P:rRNA processing"/>
    <property type="evidence" value="ECO:0007669"/>
    <property type="project" value="UniProtKB-KW"/>
</dbReference>
<dbReference type="CDD" id="cd17960">
    <property type="entry name" value="DEADc_DDX55"/>
    <property type="match status" value="1"/>
</dbReference>
<dbReference type="CDD" id="cd18787">
    <property type="entry name" value="SF2_C_DEAD"/>
    <property type="match status" value="1"/>
</dbReference>
<dbReference type="Gene3D" id="3.40.50.300">
    <property type="entry name" value="P-loop containing nucleotide triphosphate hydrolases"/>
    <property type="match status" value="2"/>
</dbReference>
<dbReference type="InterPro" id="IPR011545">
    <property type="entry name" value="DEAD/DEAH_box_helicase_dom"/>
</dbReference>
<dbReference type="InterPro" id="IPR014001">
    <property type="entry name" value="Helicase_ATP-bd"/>
</dbReference>
<dbReference type="InterPro" id="IPR001650">
    <property type="entry name" value="Helicase_C-like"/>
</dbReference>
<dbReference type="InterPro" id="IPR027417">
    <property type="entry name" value="P-loop_NTPase"/>
</dbReference>
<dbReference type="InterPro" id="IPR000629">
    <property type="entry name" value="RNA-helicase_DEAD-box_CS"/>
</dbReference>
<dbReference type="InterPro" id="IPR025313">
    <property type="entry name" value="SPB4-like_CTE"/>
</dbReference>
<dbReference type="PANTHER" id="PTHR24031">
    <property type="entry name" value="RNA HELICASE"/>
    <property type="match status" value="1"/>
</dbReference>
<dbReference type="Pfam" id="PF13959">
    <property type="entry name" value="CTE_SPB4"/>
    <property type="match status" value="1"/>
</dbReference>
<dbReference type="Pfam" id="PF00270">
    <property type="entry name" value="DEAD"/>
    <property type="match status" value="2"/>
</dbReference>
<dbReference type="Pfam" id="PF00271">
    <property type="entry name" value="Helicase_C"/>
    <property type="match status" value="1"/>
</dbReference>
<dbReference type="SMART" id="SM00487">
    <property type="entry name" value="DEXDc"/>
    <property type="match status" value="1"/>
</dbReference>
<dbReference type="SMART" id="SM01178">
    <property type="entry name" value="DUF4217"/>
    <property type="match status" value="1"/>
</dbReference>
<dbReference type="SMART" id="SM00490">
    <property type="entry name" value="HELICc"/>
    <property type="match status" value="1"/>
</dbReference>
<dbReference type="SUPFAM" id="SSF52540">
    <property type="entry name" value="P-loop containing nucleoside triphosphate hydrolases"/>
    <property type="match status" value="2"/>
</dbReference>
<dbReference type="PROSITE" id="PS00039">
    <property type="entry name" value="DEAD_ATP_HELICASE"/>
    <property type="match status" value="1"/>
</dbReference>
<dbReference type="PROSITE" id="PS51192">
    <property type="entry name" value="HELICASE_ATP_BIND_1"/>
    <property type="match status" value="1"/>
</dbReference>
<dbReference type="PROSITE" id="PS51194">
    <property type="entry name" value="HELICASE_CTER"/>
    <property type="match status" value="1"/>
</dbReference>
<dbReference type="PROSITE" id="PS51195">
    <property type="entry name" value="Q_MOTIF"/>
    <property type="match status" value="1"/>
</dbReference>
<sequence length="767" mass="85430">MSAEPSVQTTSSSGPTELRSAPSYAGSWTKLTPPLTPWVVSLLSDLGFGQMTPVQASTIPLFVSHKDVVVEAVTGSGKTLAFVIPVLEMLARRTTRLKKDEVGALIVSPTRELAEQIYKVLVMFLDAQNHAHVQAQQQQDQDEQDEQDEQEAQSDSDTDPDASTALNNKRKSSNHLVARKNMISGAQLVVGGSKCTPLDDYRQLRDSGADILVGTPGRLEELLSKKGVKKSSLEVLVLDEADRLLDLGFTENLRRILSLLPKQRRTGLFSATMTDALSELVRIGLRNPVRVVVKVEAKHKTSSSIDDSRRTPATLQNLYQLCRAQNKLAQLARIVLFESSQNAISGGARKLIVYFSTCAQVNYFYSVFSQVSILRQHRVKLYALHGKQTPSKRKSMFDTFVASTALDSGASGASVLFCTDVAARGLDLPDVDVVVQYDPPTDPKVFSHRCGRTARAGRNGRAIVMLHTGREQDFVSYMRVKRIPLSPYPYLSSTLHGILEPAEDDASAHDLELSIRDLAKTDREIFELSIRAYVSYVRAYTKHEMSYIFRINELDLAGVARAFALIRLPSMPELKSRQSAGTLIYNQEPIDFSSIPFKDKAKQRIRLAKLSGDQAKPPARIKASVDDAAQLQDDQCDSHDSDDAHPNSSATRAKNKRKLEREKGAWSAQKERKQARLANREKRARKRTFLKTQAAESSSNAKHEPPQDDHDEHDWNDDYRKLQKDKRQQRQRNKADRANSDNDDAMHFNSDSDAAAANADAEPFFVI</sequence>
<accession>Q4P9E5</accession>
<accession>A0A0D1C4W3</accession>
<proteinExistence type="inferred from homology"/>
<feature type="chain" id="PRO_0000232333" description="ATP-dependent rRNA helicase SPB4">
    <location>
        <begin position="1"/>
        <end position="767"/>
    </location>
</feature>
<feature type="domain" description="Helicase ATP-binding" evidence="3">
    <location>
        <begin position="59"/>
        <end position="291"/>
    </location>
</feature>
<feature type="domain" description="Helicase C-terminal" evidence="4">
    <location>
        <begin position="330"/>
        <end position="507"/>
    </location>
</feature>
<feature type="region of interest" description="Disordered" evidence="5">
    <location>
        <begin position="132"/>
        <end position="176"/>
    </location>
</feature>
<feature type="region of interest" description="Disordered" evidence="5">
    <location>
        <begin position="609"/>
        <end position="767"/>
    </location>
</feature>
<feature type="coiled-coil region" evidence="2">
    <location>
        <begin position="654"/>
        <end position="746"/>
    </location>
</feature>
<feature type="short sequence motif" description="Q motif" evidence="6">
    <location>
        <begin position="28"/>
        <end position="56"/>
    </location>
</feature>
<feature type="short sequence motif" description="DEAD box" evidence="6">
    <location>
        <begin position="239"/>
        <end position="242"/>
    </location>
</feature>
<feature type="compositionally biased region" description="Acidic residues" evidence="5">
    <location>
        <begin position="140"/>
        <end position="160"/>
    </location>
</feature>
<feature type="compositionally biased region" description="Basic and acidic residues" evidence="5">
    <location>
        <begin position="636"/>
        <end position="645"/>
    </location>
</feature>
<feature type="compositionally biased region" description="Basic and acidic residues" evidence="5">
    <location>
        <begin position="659"/>
        <end position="681"/>
    </location>
</feature>
<feature type="compositionally biased region" description="Polar residues" evidence="5">
    <location>
        <begin position="690"/>
        <end position="700"/>
    </location>
</feature>
<feature type="compositionally biased region" description="Basic and acidic residues" evidence="5">
    <location>
        <begin position="701"/>
        <end position="746"/>
    </location>
</feature>
<feature type="compositionally biased region" description="Low complexity" evidence="5">
    <location>
        <begin position="749"/>
        <end position="761"/>
    </location>
</feature>
<feature type="binding site" evidence="3">
    <location>
        <begin position="72"/>
        <end position="79"/>
    </location>
    <ligand>
        <name>ATP</name>
        <dbReference type="ChEBI" id="CHEBI:30616"/>
    </ligand>
</feature>